<name>SIDT1_RAT</name>
<sequence length="831" mass="94145">MLDCPRLALLCALPWLLRAAVPGHRAEPLKRSAELPRNPRDPARGADFDRVYSGVVSLSTENIYSFNHTSHPGQVTAVRVHVNSSSDNLDYPVLVVVRQQKQVLSWQVPLPFQGLYQRSYNYQEVSRTLCPSKATNETGPLEQLIFVDVASMAPHGAHYKLLVTKIKHFQLRTNVAFYFTASPSQPQYFLYKFPEDVDSVIIKVVSEKAYPCSVVSVQNIMCPVYDLDHDVEFNGVYQSMTKQAAITLQKDFPDEQFFVVFVIKPEDYACGGSFSIQENENQTWNLQRSKNLKVTIVPSVKGSVYVKSSLFSVFVFLSFYLGCLLVVFVHHMRFQRKPVDGSFGSGDGSGNMAVSHPITASTPEGSNYGAIDESSSSPGRQMSSSDGGQPCHSDTDSSVEESDFDTMPDIESDKNVIRTKMFLYLSDLSRKDRRIVSKKYKIYFWNIITIAVFYALPVMQLVITYQTVVNVTGNQDICYYNFLCAHPLGVLSAFNNILSNLGHVLLGFLFLLIVLRRDLLHRRALEAKDIFAMEYGIPKHFGLFYAMGIALMMEGVLSACYHVCPNYSNFQFDTSFMYMIAGLCMLKLYQTRHPDINASAYSAYASFAVVITLTVLGVVFGKNDVWFWIIFSAIHVLASLALSTQIYYMGRFKIDVSDTDLGIFRRAAMVFYTDCIQQCSRPLYMDRMVLLIVGNLVNWSFALFGLIYRPRDFASYMLGIFICNLLLYLAFYIIMKLRSSEKVLPLPVFCIVATAVVWAAALYFFFQNLSSWEGTPAESREKNRECVLLGFFDDHDIWHFLSATALFFSFLVLLTLDDDLDVVRRDQIPVF</sequence>
<evidence type="ECO:0000250" key="1">
    <source>
        <dbReference type="UniProtKB" id="Q6AXF6"/>
    </source>
</evidence>
<evidence type="ECO:0000255" key="2"/>
<evidence type="ECO:0000256" key="3">
    <source>
        <dbReference type="SAM" id="MobiDB-lite"/>
    </source>
</evidence>
<evidence type="ECO:0000305" key="4"/>
<evidence type="ECO:0007744" key="5">
    <source>
    </source>
</evidence>
<accession>Q6Q3F5</accession>
<keyword id="KW-0325">Glycoprotein</keyword>
<keyword id="KW-0472">Membrane</keyword>
<keyword id="KW-1185">Reference proteome</keyword>
<keyword id="KW-0694">RNA-binding</keyword>
<keyword id="KW-0732">Signal</keyword>
<keyword id="KW-0812">Transmembrane</keyword>
<keyword id="KW-1133">Transmembrane helix</keyword>
<reference key="1">
    <citation type="submission" date="2004-02" db="EMBL/GenBank/DDBJ databases">
        <authorList>
            <person name="Chen L."/>
            <person name="Shao N."/>
            <person name="Shen B."/>
            <person name="Yang G."/>
            <person name="Liu Z."/>
            <person name="Cao G."/>
            <person name="Li J."/>
            <person name="Li S."/>
            <person name="Sun W."/>
            <person name="Zhou H."/>
        </authorList>
    </citation>
    <scope>NUCLEOTIDE SEQUENCE [MRNA]</scope>
</reference>
<reference key="2">
    <citation type="journal article" date="2013" name="J. Proteome Res.">
        <title>Site-specific glycan-peptide analysis for determination of N-glycoproteome heterogeneity.</title>
        <authorList>
            <person name="Parker B.L."/>
            <person name="Thaysen-Andersen M."/>
            <person name="Solis N."/>
            <person name="Scott N.E."/>
            <person name="Larsen M.R."/>
            <person name="Graham M.E."/>
            <person name="Packer N.H."/>
            <person name="Cordwell S.J."/>
        </authorList>
    </citation>
    <scope>GLYCOSYLATION [LARGE SCALE ANALYSIS] AT ASN-83</scope>
    <scope>IDENTIFICATION BY MASS SPECTROMETRY [LARGE SCALE ANALYSIS]</scope>
    <source>
        <tissue>Brain</tissue>
    </source>
</reference>
<dbReference type="EMBL" id="AY562215">
    <property type="protein sequence ID" value="AAS87380.1"/>
    <property type="status" value="ALT_INIT"/>
    <property type="molecule type" value="mRNA"/>
</dbReference>
<dbReference type="RefSeq" id="NP_001094123.1">
    <property type="nucleotide sequence ID" value="NM_001100653.1"/>
</dbReference>
<dbReference type="SMR" id="Q6Q3F5"/>
<dbReference type="FunCoup" id="Q6Q3F5">
    <property type="interactions" value="1030"/>
</dbReference>
<dbReference type="STRING" id="10116.ENSRNOP00000002759"/>
<dbReference type="GlyCosmos" id="Q6Q3F5">
    <property type="glycosylation" value="7 sites, 4 glycans"/>
</dbReference>
<dbReference type="GlyGen" id="Q6Q3F5">
    <property type="glycosylation" value="7 sites, 4 N-linked glycans (1 site)"/>
</dbReference>
<dbReference type="iPTMnet" id="Q6Q3F5"/>
<dbReference type="PhosphoSitePlus" id="Q6Q3F5"/>
<dbReference type="PaxDb" id="10116-ENSRNOP00000002759"/>
<dbReference type="GeneID" id="288109"/>
<dbReference type="KEGG" id="rno:288109"/>
<dbReference type="UCSC" id="RGD:1559616">
    <property type="organism name" value="rat"/>
</dbReference>
<dbReference type="AGR" id="RGD:1559616"/>
<dbReference type="CTD" id="54847"/>
<dbReference type="RGD" id="1559616">
    <property type="gene designation" value="Sidt1"/>
</dbReference>
<dbReference type="eggNOG" id="ENOG502QUXZ">
    <property type="taxonomic scope" value="Eukaryota"/>
</dbReference>
<dbReference type="InParanoid" id="Q6Q3F5"/>
<dbReference type="PhylomeDB" id="Q6Q3F5"/>
<dbReference type="PRO" id="PR:Q6Q3F5"/>
<dbReference type="Proteomes" id="UP000002494">
    <property type="component" value="Unplaced"/>
</dbReference>
<dbReference type="GO" id="GO:0005764">
    <property type="term" value="C:lysosome"/>
    <property type="evidence" value="ECO:0000318"/>
    <property type="project" value="GO_Central"/>
</dbReference>
<dbReference type="GO" id="GO:0005886">
    <property type="term" value="C:plasma membrane"/>
    <property type="evidence" value="ECO:0000318"/>
    <property type="project" value="GO_Central"/>
</dbReference>
<dbReference type="GO" id="GO:0015485">
    <property type="term" value="F:cholesterol binding"/>
    <property type="evidence" value="ECO:0000266"/>
    <property type="project" value="RGD"/>
</dbReference>
<dbReference type="GO" id="GO:0003725">
    <property type="term" value="F:double-stranded RNA binding"/>
    <property type="evidence" value="ECO:0000266"/>
    <property type="project" value="RGD"/>
</dbReference>
<dbReference type="GO" id="GO:0051033">
    <property type="term" value="F:RNA transmembrane transporter activity"/>
    <property type="evidence" value="ECO:0000318"/>
    <property type="project" value="GO_Central"/>
</dbReference>
<dbReference type="GO" id="GO:0050658">
    <property type="term" value="P:RNA transport"/>
    <property type="evidence" value="ECO:0000318"/>
    <property type="project" value="GO_Central"/>
</dbReference>
<dbReference type="InterPro" id="IPR025958">
    <property type="entry name" value="SID1_TM_fam"/>
</dbReference>
<dbReference type="PANTHER" id="PTHR12185:SF15">
    <property type="entry name" value="SID1 TRANSMEMBRANE FAMILY MEMBER 1"/>
    <property type="match status" value="1"/>
</dbReference>
<dbReference type="PANTHER" id="PTHR12185">
    <property type="entry name" value="SID1 TRANSMEMBRANE FAMILY MEMEBER"/>
    <property type="match status" value="1"/>
</dbReference>
<dbReference type="Pfam" id="PF13965">
    <property type="entry name" value="SID-1_RNA_chan"/>
    <property type="match status" value="1"/>
</dbReference>
<comment type="function">
    <text evidence="1">In vitro binds long double-stranded RNA (dsRNA) (500 and 700 base pairs), but not dsRNA shorter than 300 bp. Not involved in RNA autophagy, a process in which RNA is directly imported into lysosomes in an ATP-dependent manner, and degraded.</text>
</comment>
<comment type="subcellular location">
    <subcellularLocation>
        <location evidence="4">Membrane</location>
        <topology evidence="4">Multi-pass membrane protein</topology>
    </subcellularLocation>
</comment>
<comment type="similarity">
    <text evidence="4">Belongs to the SID1 family.</text>
</comment>
<comment type="sequence caution" evidence="4">
    <conflict type="erroneous initiation">
        <sequence resource="EMBL-CDS" id="AAS87380"/>
    </conflict>
    <text>Extended N-terminus.</text>
</comment>
<proteinExistence type="evidence at protein level"/>
<organism>
    <name type="scientific">Rattus norvegicus</name>
    <name type="common">Rat</name>
    <dbReference type="NCBI Taxonomy" id="10116"/>
    <lineage>
        <taxon>Eukaryota</taxon>
        <taxon>Metazoa</taxon>
        <taxon>Chordata</taxon>
        <taxon>Craniata</taxon>
        <taxon>Vertebrata</taxon>
        <taxon>Euteleostomi</taxon>
        <taxon>Mammalia</taxon>
        <taxon>Eutheria</taxon>
        <taxon>Euarchontoglires</taxon>
        <taxon>Glires</taxon>
        <taxon>Rodentia</taxon>
        <taxon>Myomorpha</taxon>
        <taxon>Muroidea</taxon>
        <taxon>Muridae</taxon>
        <taxon>Murinae</taxon>
        <taxon>Rattus</taxon>
    </lineage>
</organism>
<gene>
    <name type="primary">Sidt1</name>
</gene>
<protein>
    <recommendedName>
        <fullName>SID1 transmembrane family member 1</fullName>
    </recommendedName>
</protein>
<feature type="signal peptide" evidence="2">
    <location>
        <begin position="1"/>
        <end position="19"/>
    </location>
</feature>
<feature type="chain" id="PRO_0000032577" description="SID1 transmembrane family member 1">
    <location>
        <begin position="20"/>
        <end position="831"/>
    </location>
</feature>
<feature type="topological domain" description="Extracellular" evidence="2">
    <location>
        <begin position="20"/>
        <end position="308"/>
    </location>
</feature>
<feature type="transmembrane region" description="Helical" evidence="2">
    <location>
        <begin position="309"/>
        <end position="329"/>
    </location>
</feature>
<feature type="topological domain" description="Cytoplasmic" evidence="2">
    <location>
        <begin position="330"/>
        <end position="441"/>
    </location>
</feature>
<feature type="transmembrane region" description="Helical" evidence="2">
    <location>
        <begin position="442"/>
        <end position="462"/>
    </location>
</feature>
<feature type="topological domain" description="Extracellular" evidence="2">
    <location>
        <begin position="463"/>
        <end position="493"/>
    </location>
</feature>
<feature type="transmembrane region" description="Helical" evidence="2">
    <location>
        <begin position="494"/>
        <end position="514"/>
    </location>
</feature>
<feature type="topological domain" description="Cytoplasmic" evidence="2">
    <location>
        <begin position="515"/>
        <end position="540"/>
    </location>
</feature>
<feature type="transmembrane region" description="Helical" evidence="2">
    <location>
        <begin position="541"/>
        <end position="561"/>
    </location>
</feature>
<feature type="topological domain" description="Extracellular" evidence="2">
    <location>
        <begin position="562"/>
        <end position="571"/>
    </location>
</feature>
<feature type="transmembrane region" description="Helical" evidence="2">
    <location>
        <begin position="572"/>
        <end position="589"/>
    </location>
</feature>
<feature type="topological domain" description="Cytoplasmic" evidence="2">
    <location>
        <begin position="590"/>
        <end position="599"/>
    </location>
</feature>
<feature type="transmembrane region" description="Helical" evidence="2">
    <location>
        <begin position="600"/>
        <end position="620"/>
    </location>
</feature>
<feature type="topological domain" description="Extracellular" evidence="2">
    <location>
        <begin position="621"/>
        <end position="625"/>
    </location>
</feature>
<feature type="transmembrane region" description="Helical" evidence="2">
    <location>
        <begin position="626"/>
        <end position="646"/>
    </location>
</feature>
<feature type="topological domain" description="Cytoplasmic" evidence="2">
    <location>
        <begin position="647"/>
        <end position="687"/>
    </location>
</feature>
<feature type="transmembrane region" description="Helical" evidence="2">
    <location>
        <begin position="688"/>
        <end position="708"/>
    </location>
</feature>
<feature type="topological domain" description="Extracellular" evidence="2">
    <location>
        <begin position="709"/>
        <end position="714"/>
    </location>
</feature>
<feature type="transmembrane region" description="Helical" evidence="2">
    <location>
        <begin position="715"/>
        <end position="735"/>
    </location>
</feature>
<feature type="topological domain" description="Cytoplasmic" evidence="2">
    <location>
        <begin position="736"/>
        <end position="745"/>
    </location>
</feature>
<feature type="transmembrane region" description="Helical" evidence="2">
    <location>
        <begin position="746"/>
        <end position="766"/>
    </location>
</feature>
<feature type="topological domain" description="Extracellular" evidence="2">
    <location>
        <begin position="767"/>
        <end position="795"/>
    </location>
</feature>
<feature type="transmembrane region" description="Helical" evidence="2">
    <location>
        <begin position="796"/>
        <end position="816"/>
    </location>
</feature>
<feature type="topological domain" description="Cytoplasmic" evidence="2">
    <location>
        <begin position="817"/>
        <end position="831"/>
    </location>
</feature>
<feature type="region of interest" description="Disordered" evidence="3">
    <location>
        <begin position="354"/>
        <end position="408"/>
    </location>
</feature>
<feature type="compositionally biased region" description="Low complexity" evidence="3">
    <location>
        <begin position="374"/>
        <end position="385"/>
    </location>
</feature>
<feature type="compositionally biased region" description="Acidic residues" evidence="3">
    <location>
        <begin position="397"/>
        <end position="408"/>
    </location>
</feature>
<feature type="glycosylation site" description="N-linked (GlcNAc...) asparagine" evidence="2">
    <location>
        <position position="67"/>
    </location>
</feature>
<feature type="glycosylation site" description="N-linked (GlcNAc...) asparagine" evidence="5">
    <location>
        <position position="83"/>
    </location>
</feature>
<feature type="glycosylation site" description="N-linked (GlcNAc...) asparagine" evidence="2">
    <location>
        <position position="136"/>
    </location>
</feature>
<feature type="glycosylation site" description="N-linked (GlcNAc...) asparagine" evidence="2">
    <location>
        <position position="281"/>
    </location>
</feature>
<feature type="glycosylation site" description="N-linked (GlcNAc...) asparagine" evidence="2">
    <location>
        <position position="470"/>
    </location>
</feature>
<feature type="glycosylation site" description="N-linked (GlcNAc...) asparagine" evidence="2">
    <location>
        <position position="566"/>
    </location>
</feature>
<feature type="glycosylation site" description="N-linked (GlcNAc...) asparagine" evidence="2">
    <location>
        <position position="768"/>
    </location>
</feature>